<comment type="function">
    <text evidence="1 2">Attaches the virus to host cellular receptor, inducing endocytosis of the virion by using different host proteins including TFRC, GRM2 and ITGB1 (By similarity). In the endosome, the acidic pH induces conformational changes in the glycoprotein trimer, which trigger fusion between virus and cell membrane. There is convincing in vitro evidence that the muscular form of the nicotinic acetylcholine receptor (nAChR), the neuronal cell adhesion molecule (NCAM), and the p75 neurotrophin receptor (p75NTR) bind glycoprotein and thereby facilitate rabies virus entry into cells (By similarity).</text>
</comment>
<comment type="subunit">
    <text evidence="1 2">Homotrimer (By similarity). Interacts with matrix protein (By similarity). Interacts with host TRFC. Interacts with host BST2; this interaction inhibits viral budding by tethering new virions to the cell surface. Interacts with ITGB1. Interacts with host GRM2 (By similarity).</text>
</comment>
<comment type="subcellular location">
    <subcellularLocation>
        <location evidence="4">Virion membrane</location>
        <topology evidence="4">Single-pass type I membrane protein</topology>
    </subcellularLocation>
</comment>
<comment type="PTM">
    <text evidence="1">Glycosylated and palmitoylated by host. Glycosylation is crucial for glycoprotein export at the cell surface (By similarity).</text>
</comment>
<comment type="biotechnology">
    <text>Primary surface antigen capable of inducing and reacting with virus-neutralizing antibodies. Almost all human and veterinary vaccines are based on the functional aspects of the G protein.</text>
</comment>
<comment type="miscellaneous">
    <text evidence="1">Arg-352 is highly involved in rabies virus pathogenicity. Its mutation dramatically attenuates the virus (By similarity).</text>
</comment>
<comment type="similarity">
    <text evidence="4">Belongs to the lyssavirus glycoprotein family.</text>
</comment>
<evidence type="ECO:0000250" key="1"/>
<evidence type="ECO:0000250" key="2">
    <source>
        <dbReference type="UniProtKB" id="P08667"/>
    </source>
</evidence>
<evidence type="ECO:0000255" key="3"/>
<evidence type="ECO:0000305" key="4"/>
<gene>
    <name type="primary">G</name>
</gene>
<dbReference type="EMBL" id="X71879">
    <property type="protein sequence ID" value="CAA50713.1"/>
    <property type="molecule type" value="mRNA"/>
</dbReference>
<dbReference type="PIR" id="S33419">
    <property type="entry name" value="S33419"/>
</dbReference>
<dbReference type="SMR" id="Q08089"/>
<dbReference type="IntAct" id="Q08089">
    <property type="interactions" value="1"/>
</dbReference>
<dbReference type="MINT" id="Q08089"/>
<dbReference type="GlyCosmos" id="Q08089">
    <property type="glycosylation" value="3 sites, No reported glycans"/>
</dbReference>
<dbReference type="GO" id="GO:0016020">
    <property type="term" value="C:membrane"/>
    <property type="evidence" value="ECO:0007669"/>
    <property type="project" value="UniProtKB-KW"/>
</dbReference>
<dbReference type="GO" id="GO:0019031">
    <property type="term" value="C:viral envelope"/>
    <property type="evidence" value="ECO:0007669"/>
    <property type="project" value="UniProtKB-KW"/>
</dbReference>
<dbReference type="GO" id="GO:0036338">
    <property type="term" value="C:viral membrane"/>
    <property type="evidence" value="ECO:0000250"/>
    <property type="project" value="UniProtKB"/>
</dbReference>
<dbReference type="GO" id="GO:0055036">
    <property type="term" value="C:virion membrane"/>
    <property type="evidence" value="ECO:0007669"/>
    <property type="project" value="UniProtKB-SubCell"/>
</dbReference>
<dbReference type="GO" id="GO:0098670">
    <property type="term" value="P:entry receptor-mediated virion attachment to host cell"/>
    <property type="evidence" value="ECO:0000250"/>
    <property type="project" value="UniProtKB"/>
</dbReference>
<dbReference type="GO" id="GO:0039654">
    <property type="term" value="P:fusion of virus membrane with host endosome membrane"/>
    <property type="evidence" value="ECO:0000250"/>
    <property type="project" value="UniProtKB"/>
</dbReference>
<dbReference type="Gene3D" id="2.30.29.130">
    <property type="match status" value="1"/>
</dbReference>
<dbReference type="InterPro" id="IPR055448">
    <property type="entry name" value="PH_Rhabdo_glycop"/>
</dbReference>
<dbReference type="InterPro" id="IPR055447">
    <property type="entry name" value="Rhabdo_glycop_CD"/>
</dbReference>
<dbReference type="InterPro" id="IPR001903">
    <property type="entry name" value="Rhabdo_glycop_FD"/>
</dbReference>
<dbReference type="Pfam" id="PF24834">
    <property type="entry name" value="PH_Rhabdo_glycop"/>
    <property type="match status" value="1"/>
</dbReference>
<dbReference type="Pfam" id="PF24833">
    <property type="entry name" value="Rhabdo_glycop_CD"/>
    <property type="match status" value="1"/>
</dbReference>
<dbReference type="Pfam" id="PF00974">
    <property type="entry name" value="Rhabdo_glycop_FD"/>
    <property type="match status" value="1"/>
</dbReference>
<dbReference type="SUPFAM" id="SSF161008">
    <property type="entry name" value="Viral glycoprotein ectodomain-like"/>
    <property type="match status" value="1"/>
</dbReference>
<feature type="signal peptide" evidence="3">
    <location>
        <begin position="1"/>
        <end position="19"/>
    </location>
</feature>
<feature type="chain" id="PRO_0000040998" description="Glycoprotein">
    <location>
        <begin position="20"/>
        <end position="524"/>
    </location>
</feature>
<feature type="topological domain" description="Virion surface" evidence="3">
    <location>
        <begin position="20"/>
        <end position="459"/>
    </location>
</feature>
<feature type="transmembrane region" description="Helical" evidence="3">
    <location>
        <begin position="460"/>
        <end position="480"/>
    </location>
</feature>
<feature type="topological domain" description="Intravirion" evidence="3">
    <location>
        <begin position="481"/>
        <end position="524"/>
    </location>
</feature>
<feature type="lipid moiety-binding region" description="S-palmitoyl cysteine; by host" evidence="1">
    <location>
        <position position="480"/>
    </location>
</feature>
<feature type="glycosylation site" description="N-linked (GlcNAc...) asparagine; by host" evidence="1">
    <location>
        <position position="56"/>
    </location>
</feature>
<feature type="glycosylation site" description="N-linked (GlcNAc...) asparagine; by host" evidence="1">
    <location>
        <position position="266"/>
    </location>
</feature>
<feature type="glycosylation site" description="N-linked (GlcNAc...) asparagine; by host" evidence="1">
    <location>
        <position position="338"/>
    </location>
</feature>
<feature type="disulfide bond" evidence="2">
    <location>
        <begin position="43"/>
        <end position="302"/>
    </location>
</feature>
<feature type="disulfide bond" evidence="2">
    <location>
        <begin position="54"/>
        <end position="226"/>
    </location>
</feature>
<feature type="disulfide bond" evidence="2">
    <location>
        <begin position="80"/>
        <end position="113"/>
    </location>
</feature>
<feature type="disulfide bond" evidence="2">
    <location>
        <begin position="178"/>
        <end position="188"/>
    </location>
</feature>
<feature type="disulfide bond" evidence="2">
    <location>
        <begin position="208"/>
        <end position="247"/>
    </location>
</feature>
<feature type="disulfide bond" evidence="2">
    <location>
        <begin position="242"/>
        <end position="271"/>
    </location>
</feature>
<feature type="disulfide bond" evidence="2">
    <location>
        <begin position="363"/>
        <end position="370"/>
    </location>
</feature>
<sequence length="524" mass="58692">MVPQALLFVPLLVFPLCFGKFPIYTIPDKLGPWSPIDIHHLSCPNNLVVEDEGCTNLSGFSYMELKVGYILAIKMNGFTCTGVVTEAENYTNFVGYVTTTFKRKHLRPTPDACRAAYNWKMAGDPRYEESLHNPYPDYSWLRTVKTTKESLVIISPSVADLDPYDRSLHSRVFPSGKCSGVAVSSTYCSTNHDYTIWMPENPRLGKSCDIFTNSRGKRASKGSETCGFVDERGLYKSLKGACKLKLCGVLGLRLMDGTWVAMQTSNETKWCPPDQLVNLHDFRSDEIEHLVVEELVRKREECLDALESIMTTKSVSFRRLSHLRKLVPGFGKAYTIFNKTLMEADAHYKSVRTWNEILPSKGCLRVGGRCHPHVNGVFFNGIILGPDGNVLIPEMQSSLLQQHMELLESSVIPLVHPLADPSTVFKDGDEAEDFVEVHLPDVHNQVSGVDLGLPNWGKYVLLSAGALTALMLIIFLMTCCRRVNRSEPTQHNLRGTGREVSVTPQTWKIISSWESHKSGGETRL</sequence>
<organism>
    <name type="scientific">Rabies virus (strain Vnukovo-32)</name>
    <name type="common">RABV</name>
    <dbReference type="NCBI Taxonomy" id="45418"/>
    <lineage>
        <taxon>Viruses</taxon>
        <taxon>Riboviria</taxon>
        <taxon>Orthornavirae</taxon>
        <taxon>Negarnaviricota</taxon>
        <taxon>Haploviricotina</taxon>
        <taxon>Monjiviricetes</taxon>
        <taxon>Mononegavirales</taxon>
        <taxon>Rhabdoviridae</taxon>
        <taxon>Alpharhabdovirinae</taxon>
        <taxon>Lyssavirus</taxon>
        <taxon>Lyssavirus rabies</taxon>
    </lineage>
</organism>
<proteinExistence type="evidence at protein level"/>
<keyword id="KW-1015">Disulfide bond</keyword>
<keyword id="KW-0325">Glycoprotein</keyword>
<keyword id="KW-0449">Lipoprotein</keyword>
<keyword id="KW-0472">Membrane</keyword>
<keyword id="KW-0564">Palmitate</keyword>
<keyword id="KW-0732">Signal</keyword>
<keyword id="KW-0812">Transmembrane</keyword>
<keyword id="KW-1133">Transmembrane helix</keyword>
<keyword id="KW-0261">Viral envelope protein</keyword>
<keyword id="KW-0946">Virion</keyword>
<accession>Q08089</accession>
<protein>
    <recommendedName>
        <fullName>Glycoprotein</fullName>
    </recommendedName>
</protein>
<name>GLYCO_RABVV</name>
<reference key="1">
    <citation type="journal article" date="1994" name="Arch. Virol.">
        <title>Nucleotide and deduced amino acid sequences of the glycoprotein gene of rabies virus vaccine strain Vnukovo-32.</title>
        <authorList>
            <person name="Fodor I."/>
            <person name="Grabko V.I."/>
            <person name="Khozinski V.V."/>
            <person name="Selimov M.A."/>
        </authorList>
    </citation>
    <scope>NUCLEOTIDE SEQUENCE [MRNA]</scope>
</reference>
<organismHost>
    <name type="scientific">Homo sapiens</name>
    <name type="common">Human</name>
    <dbReference type="NCBI Taxonomy" id="9606"/>
</organismHost>
<organismHost>
    <name type="scientific">Mammalia</name>
    <dbReference type="NCBI Taxonomy" id="40674"/>
</organismHost>